<accession>Q4KHS8</accession>
<name>PDXJ_PSEF5</name>
<dbReference type="EC" id="2.6.99.2" evidence="1"/>
<dbReference type="EMBL" id="CP000076">
    <property type="protein sequence ID" value="AAY90361.1"/>
    <property type="molecule type" value="Genomic_DNA"/>
</dbReference>
<dbReference type="RefSeq" id="WP_011059424.1">
    <property type="nucleotide sequence ID" value="NC_004129.6"/>
</dbReference>
<dbReference type="SMR" id="Q4KHS8"/>
<dbReference type="STRING" id="220664.PFL_1074"/>
<dbReference type="GeneID" id="57474078"/>
<dbReference type="KEGG" id="pfl:PFL_1074"/>
<dbReference type="PATRIC" id="fig|220664.5.peg.1102"/>
<dbReference type="eggNOG" id="COG0854">
    <property type="taxonomic scope" value="Bacteria"/>
</dbReference>
<dbReference type="HOGENOM" id="CLU_074563_0_0_6"/>
<dbReference type="UniPathway" id="UPA00244">
    <property type="reaction ID" value="UER00313"/>
</dbReference>
<dbReference type="Proteomes" id="UP000008540">
    <property type="component" value="Chromosome"/>
</dbReference>
<dbReference type="GO" id="GO:0005829">
    <property type="term" value="C:cytosol"/>
    <property type="evidence" value="ECO:0007669"/>
    <property type="project" value="TreeGrafter"/>
</dbReference>
<dbReference type="GO" id="GO:0033856">
    <property type="term" value="F:pyridoxine 5'-phosphate synthase activity"/>
    <property type="evidence" value="ECO:0007669"/>
    <property type="project" value="UniProtKB-EC"/>
</dbReference>
<dbReference type="GO" id="GO:0008615">
    <property type="term" value="P:pyridoxine biosynthetic process"/>
    <property type="evidence" value="ECO:0007669"/>
    <property type="project" value="UniProtKB-UniRule"/>
</dbReference>
<dbReference type="CDD" id="cd00003">
    <property type="entry name" value="PNPsynthase"/>
    <property type="match status" value="1"/>
</dbReference>
<dbReference type="FunFam" id="3.20.20.70:FF:000042">
    <property type="entry name" value="Pyridoxine 5'-phosphate synthase"/>
    <property type="match status" value="1"/>
</dbReference>
<dbReference type="Gene3D" id="3.20.20.70">
    <property type="entry name" value="Aldolase class I"/>
    <property type="match status" value="1"/>
</dbReference>
<dbReference type="HAMAP" id="MF_00279">
    <property type="entry name" value="PdxJ"/>
    <property type="match status" value="1"/>
</dbReference>
<dbReference type="InterPro" id="IPR013785">
    <property type="entry name" value="Aldolase_TIM"/>
</dbReference>
<dbReference type="InterPro" id="IPR004569">
    <property type="entry name" value="PyrdxlP_synth_PdxJ"/>
</dbReference>
<dbReference type="InterPro" id="IPR036130">
    <property type="entry name" value="Pyridoxine-5'_phos_synth"/>
</dbReference>
<dbReference type="NCBIfam" id="TIGR00559">
    <property type="entry name" value="pdxJ"/>
    <property type="match status" value="1"/>
</dbReference>
<dbReference type="NCBIfam" id="NF003623">
    <property type="entry name" value="PRK05265.1-1"/>
    <property type="match status" value="1"/>
</dbReference>
<dbReference type="NCBIfam" id="NF003625">
    <property type="entry name" value="PRK05265.1-3"/>
    <property type="match status" value="1"/>
</dbReference>
<dbReference type="NCBIfam" id="NF003627">
    <property type="entry name" value="PRK05265.1-5"/>
    <property type="match status" value="1"/>
</dbReference>
<dbReference type="PANTHER" id="PTHR30456">
    <property type="entry name" value="PYRIDOXINE 5'-PHOSPHATE SYNTHASE"/>
    <property type="match status" value="1"/>
</dbReference>
<dbReference type="PANTHER" id="PTHR30456:SF0">
    <property type="entry name" value="PYRIDOXINE 5'-PHOSPHATE SYNTHASE"/>
    <property type="match status" value="1"/>
</dbReference>
<dbReference type="Pfam" id="PF03740">
    <property type="entry name" value="PdxJ"/>
    <property type="match status" value="1"/>
</dbReference>
<dbReference type="SUPFAM" id="SSF63892">
    <property type="entry name" value="Pyridoxine 5'-phosphate synthase"/>
    <property type="match status" value="1"/>
</dbReference>
<gene>
    <name evidence="1" type="primary">pdxJ</name>
    <name type="ordered locus">PFL_1074</name>
</gene>
<feature type="chain" id="PRO_0000231834" description="Pyridoxine 5'-phosphate synthase">
    <location>
        <begin position="1"/>
        <end position="248"/>
    </location>
</feature>
<feature type="active site" description="Proton acceptor" evidence="1">
    <location>
        <position position="48"/>
    </location>
</feature>
<feature type="active site" description="Proton acceptor" evidence="1">
    <location>
        <position position="75"/>
    </location>
</feature>
<feature type="active site" description="Proton donor" evidence="1">
    <location>
        <position position="196"/>
    </location>
</feature>
<feature type="binding site" evidence="1">
    <location>
        <position position="12"/>
    </location>
    <ligand>
        <name>3-amino-2-oxopropyl phosphate</name>
        <dbReference type="ChEBI" id="CHEBI:57279"/>
    </ligand>
</feature>
<feature type="binding site" evidence="1">
    <location>
        <begin position="14"/>
        <end position="15"/>
    </location>
    <ligand>
        <name>1-deoxy-D-xylulose 5-phosphate</name>
        <dbReference type="ChEBI" id="CHEBI:57792"/>
    </ligand>
</feature>
<feature type="binding site" evidence="1">
    <location>
        <position position="23"/>
    </location>
    <ligand>
        <name>3-amino-2-oxopropyl phosphate</name>
        <dbReference type="ChEBI" id="CHEBI:57279"/>
    </ligand>
</feature>
<feature type="binding site" evidence="1">
    <location>
        <position position="50"/>
    </location>
    <ligand>
        <name>1-deoxy-D-xylulose 5-phosphate</name>
        <dbReference type="ChEBI" id="CHEBI:57792"/>
    </ligand>
</feature>
<feature type="binding site" evidence="1">
    <location>
        <position position="55"/>
    </location>
    <ligand>
        <name>1-deoxy-D-xylulose 5-phosphate</name>
        <dbReference type="ChEBI" id="CHEBI:57792"/>
    </ligand>
</feature>
<feature type="binding site" evidence="1">
    <location>
        <position position="105"/>
    </location>
    <ligand>
        <name>1-deoxy-D-xylulose 5-phosphate</name>
        <dbReference type="ChEBI" id="CHEBI:57792"/>
    </ligand>
</feature>
<feature type="binding site" evidence="1">
    <location>
        <position position="197"/>
    </location>
    <ligand>
        <name>3-amino-2-oxopropyl phosphate</name>
        <dbReference type="ChEBI" id="CHEBI:57279"/>
    </ligand>
</feature>
<feature type="binding site" evidence="1">
    <location>
        <begin position="218"/>
        <end position="219"/>
    </location>
    <ligand>
        <name>3-amino-2-oxopropyl phosphate</name>
        <dbReference type="ChEBI" id="CHEBI:57279"/>
    </ligand>
</feature>
<feature type="site" description="Transition state stabilizer" evidence="1">
    <location>
        <position position="156"/>
    </location>
</feature>
<evidence type="ECO:0000255" key="1">
    <source>
        <dbReference type="HAMAP-Rule" id="MF_00279"/>
    </source>
</evidence>
<sequence length="248" mass="26754">MTTSNRILLGVNIDHVATLRQARGTRYPDPVKAALDAEEAGADGITVHLREDRRHIQERDVLLLKDVLQTRMNFEMGVTEEMMAFAERIRPAHICLVPETRQELTTEGGLDVAGQEARIKAAVERLSKIGSEVSLFIDADERQIEASKRVGAPAIELHTGRYADAQTPSEVAEELQRIVDGVAVGLAQGLIVNAGHGLHYHNVEAVAAIKGINELNIGHALVAHALFVGFKGAVAEMKALILAAAAKA</sequence>
<organism>
    <name type="scientific">Pseudomonas fluorescens (strain ATCC BAA-477 / NRRL B-23932 / Pf-5)</name>
    <dbReference type="NCBI Taxonomy" id="220664"/>
    <lineage>
        <taxon>Bacteria</taxon>
        <taxon>Pseudomonadati</taxon>
        <taxon>Pseudomonadota</taxon>
        <taxon>Gammaproteobacteria</taxon>
        <taxon>Pseudomonadales</taxon>
        <taxon>Pseudomonadaceae</taxon>
        <taxon>Pseudomonas</taxon>
    </lineage>
</organism>
<reference key="1">
    <citation type="journal article" date="2005" name="Nat. Biotechnol.">
        <title>Complete genome sequence of the plant commensal Pseudomonas fluorescens Pf-5.</title>
        <authorList>
            <person name="Paulsen I.T."/>
            <person name="Press C.M."/>
            <person name="Ravel J."/>
            <person name="Kobayashi D.Y."/>
            <person name="Myers G.S.A."/>
            <person name="Mavrodi D.V."/>
            <person name="DeBoy R.T."/>
            <person name="Seshadri R."/>
            <person name="Ren Q."/>
            <person name="Madupu R."/>
            <person name="Dodson R.J."/>
            <person name="Durkin A.S."/>
            <person name="Brinkac L.M."/>
            <person name="Daugherty S.C."/>
            <person name="Sullivan S.A."/>
            <person name="Rosovitz M.J."/>
            <person name="Gwinn M.L."/>
            <person name="Zhou L."/>
            <person name="Schneider D.J."/>
            <person name="Cartinhour S.W."/>
            <person name="Nelson W.C."/>
            <person name="Weidman J."/>
            <person name="Watkins K."/>
            <person name="Tran K."/>
            <person name="Khouri H."/>
            <person name="Pierson E.A."/>
            <person name="Pierson L.S. III"/>
            <person name="Thomashow L.S."/>
            <person name="Loper J.E."/>
        </authorList>
    </citation>
    <scope>NUCLEOTIDE SEQUENCE [LARGE SCALE GENOMIC DNA]</scope>
    <source>
        <strain>ATCC BAA-477 / NRRL B-23932 / Pf-5</strain>
    </source>
</reference>
<proteinExistence type="inferred from homology"/>
<keyword id="KW-0963">Cytoplasm</keyword>
<keyword id="KW-0664">Pyridoxine biosynthesis</keyword>
<keyword id="KW-0808">Transferase</keyword>
<comment type="function">
    <text evidence="1">Catalyzes the complicated ring closure reaction between the two acyclic compounds 1-deoxy-D-xylulose-5-phosphate (DXP) and 3-amino-2-oxopropyl phosphate (1-amino-acetone-3-phosphate or AAP) to form pyridoxine 5'-phosphate (PNP) and inorganic phosphate.</text>
</comment>
<comment type="catalytic activity">
    <reaction evidence="1">
        <text>3-amino-2-oxopropyl phosphate + 1-deoxy-D-xylulose 5-phosphate = pyridoxine 5'-phosphate + phosphate + 2 H2O + H(+)</text>
        <dbReference type="Rhea" id="RHEA:15265"/>
        <dbReference type="ChEBI" id="CHEBI:15377"/>
        <dbReference type="ChEBI" id="CHEBI:15378"/>
        <dbReference type="ChEBI" id="CHEBI:43474"/>
        <dbReference type="ChEBI" id="CHEBI:57279"/>
        <dbReference type="ChEBI" id="CHEBI:57792"/>
        <dbReference type="ChEBI" id="CHEBI:58589"/>
        <dbReference type="EC" id="2.6.99.2"/>
    </reaction>
</comment>
<comment type="pathway">
    <text evidence="1">Cofactor biosynthesis; pyridoxine 5'-phosphate biosynthesis; pyridoxine 5'-phosphate from D-erythrose 4-phosphate: step 5/5.</text>
</comment>
<comment type="subunit">
    <text evidence="1">Homooctamer; tetramer of dimers.</text>
</comment>
<comment type="subcellular location">
    <subcellularLocation>
        <location evidence="1">Cytoplasm</location>
    </subcellularLocation>
</comment>
<comment type="similarity">
    <text evidence="1">Belongs to the PNP synthase family.</text>
</comment>
<protein>
    <recommendedName>
        <fullName evidence="1">Pyridoxine 5'-phosphate synthase</fullName>
        <shortName evidence="1">PNP synthase</shortName>
        <ecNumber evidence="1">2.6.99.2</ecNumber>
    </recommendedName>
</protein>